<sequence>MKDIKPAILLFIMFTIICGGIYPALVTGIAHALFPDQAKGSLIIDKAGKELGSNLIGQPFSAPQYLWPRPSVTAEFGYNPSASGGSNSGQTNPDYLKTVAERVKTLRESGMTGLIPTELAQASASGLDPHLSPQAARLQAARIAKARGIPETAVQKLINENTAGPQLGILGAARVNVLAVNLKLDTLTR</sequence>
<accession>B3EAQ1</accession>
<gene>
    <name evidence="1" type="primary">kdpC</name>
    <name type="ordered locus">Glov_3228</name>
</gene>
<proteinExistence type="inferred from homology"/>
<feature type="chain" id="PRO_1000114726" description="Potassium-transporting ATPase KdpC subunit">
    <location>
        <begin position="1"/>
        <end position="189"/>
    </location>
</feature>
<feature type="transmembrane region" description="Helical" evidence="1">
    <location>
        <begin position="6"/>
        <end position="26"/>
    </location>
</feature>
<dbReference type="EMBL" id="CP001089">
    <property type="protein sequence ID" value="ACD96934.1"/>
    <property type="molecule type" value="Genomic_DNA"/>
</dbReference>
<dbReference type="RefSeq" id="WP_012471258.1">
    <property type="nucleotide sequence ID" value="NC_010814.1"/>
</dbReference>
<dbReference type="SMR" id="B3EAQ1"/>
<dbReference type="STRING" id="398767.Glov_3228"/>
<dbReference type="KEGG" id="glo:Glov_3228"/>
<dbReference type="eggNOG" id="COG2156">
    <property type="taxonomic scope" value="Bacteria"/>
</dbReference>
<dbReference type="HOGENOM" id="CLU_077094_2_0_7"/>
<dbReference type="OrthoDB" id="9788285at2"/>
<dbReference type="Proteomes" id="UP000002420">
    <property type="component" value="Chromosome"/>
</dbReference>
<dbReference type="GO" id="GO:0005886">
    <property type="term" value="C:plasma membrane"/>
    <property type="evidence" value="ECO:0007669"/>
    <property type="project" value="UniProtKB-SubCell"/>
</dbReference>
<dbReference type="GO" id="GO:0005524">
    <property type="term" value="F:ATP binding"/>
    <property type="evidence" value="ECO:0007669"/>
    <property type="project" value="UniProtKB-UniRule"/>
</dbReference>
<dbReference type="GO" id="GO:0008556">
    <property type="term" value="F:P-type potassium transmembrane transporter activity"/>
    <property type="evidence" value="ECO:0007669"/>
    <property type="project" value="InterPro"/>
</dbReference>
<dbReference type="HAMAP" id="MF_00276">
    <property type="entry name" value="KdpC"/>
    <property type="match status" value="1"/>
</dbReference>
<dbReference type="InterPro" id="IPR003820">
    <property type="entry name" value="KdpC"/>
</dbReference>
<dbReference type="NCBIfam" id="TIGR00681">
    <property type="entry name" value="kdpC"/>
    <property type="match status" value="1"/>
</dbReference>
<dbReference type="NCBIfam" id="NF001454">
    <property type="entry name" value="PRK00315.1"/>
    <property type="match status" value="1"/>
</dbReference>
<dbReference type="PANTHER" id="PTHR30042">
    <property type="entry name" value="POTASSIUM-TRANSPORTING ATPASE C CHAIN"/>
    <property type="match status" value="1"/>
</dbReference>
<dbReference type="PANTHER" id="PTHR30042:SF2">
    <property type="entry name" value="POTASSIUM-TRANSPORTING ATPASE KDPC SUBUNIT"/>
    <property type="match status" value="1"/>
</dbReference>
<dbReference type="Pfam" id="PF02669">
    <property type="entry name" value="KdpC"/>
    <property type="match status" value="1"/>
</dbReference>
<dbReference type="PIRSF" id="PIRSF001296">
    <property type="entry name" value="K_ATPase_KdpC"/>
    <property type="match status" value="1"/>
</dbReference>
<name>KDPC_TRIL1</name>
<organism>
    <name type="scientific">Trichlorobacter lovleyi (strain ATCC BAA-1151 / DSM 17278 / SZ)</name>
    <name type="common">Geobacter lovleyi</name>
    <dbReference type="NCBI Taxonomy" id="398767"/>
    <lineage>
        <taxon>Bacteria</taxon>
        <taxon>Pseudomonadati</taxon>
        <taxon>Thermodesulfobacteriota</taxon>
        <taxon>Desulfuromonadia</taxon>
        <taxon>Geobacterales</taxon>
        <taxon>Geobacteraceae</taxon>
        <taxon>Trichlorobacter</taxon>
    </lineage>
</organism>
<protein>
    <recommendedName>
        <fullName evidence="1">Potassium-transporting ATPase KdpC subunit</fullName>
    </recommendedName>
    <alternativeName>
        <fullName evidence="1">ATP phosphohydrolase [potassium-transporting] C chain</fullName>
    </alternativeName>
    <alternativeName>
        <fullName evidence="1">Potassium-binding and translocating subunit C</fullName>
    </alternativeName>
    <alternativeName>
        <fullName evidence="1">Potassium-translocating ATPase C chain</fullName>
    </alternativeName>
</protein>
<keyword id="KW-0067">ATP-binding</keyword>
<keyword id="KW-0997">Cell inner membrane</keyword>
<keyword id="KW-1003">Cell membrane</keyword>
<keyword id="KW-0406">Ion transport</keyword>
<keyword id="KW-0472">Membrane</keyword>
<keyword id="KW-0547">Nucleotide-binding</keyword>
<keyword id="KW-0630">Potassium</keyword>
<keyword id="KW-0633">Potassium transport</keyword>
<keyword id="KW-1185">Reference proteome</keyword>
<keyword id="KW-0812">Transmembrane</keyword>
<keyword id="KW-1133">Transmembrane helix</keyword>
<keyword id="KW-0813">Transport</keyword>
<evidence type="ECO:0000255" key="1">
    <source>
        <dbReference type="HAMAP-Rule" id="MF_00276"/>
    </source>
</evidence>
<comment type="function">
    <text evidence="1">Part of the high-affinity ATP-driven potassium transport (or Kdp) system, which catalyzes the hydrolysis of ATP coupled with the electrogenic transport of potassium into the cytoplasm. This subunit acts as a catalytic chaperone that increases the ATP-binding affinity of the ATP-hydrolyzing subunit KdpB by the formation of a transient KdpB/KdpC/ATP ternary complex.</text>
</comment>
<comment type="subunit">
    <text evidence="1">The system is composed of three essential subunits: KdpA, KdpB and KdpC.</text>
</comment>
<comment type="subcellular location">
    <subcellularLocation>
        <location evidence="1">Cell inner membrane</location>
        <topology evidence="1">Single-pass membrane protein</topology>
    </subcellularLocation>
</comment>
<comment type="similarity">
    <text evidence="1">Belongs to the KdpC family.</text>
</comment>
<reference key="1">
    <citation type="submission" date="2008-05" db="EMBL/GenBank/DDBJ databases">
        <title>Complete sequence of chromosome of Geobacter lovleyi SZ.</title>
        <authorList>
            <consortium name="US DOE Joint Genome Institute"/>
            <person name="Lucas S."/>
            <person name="Copeland A."/>
            <person name="Lapidus A."/>
            <person name="Glavina del Rio T."/>
            <person name="Dalin E."/>
            <person name="Tice H."/>
            <person name="Bruce D."/>
            <person name="Goodwin L."/>
            <person name="Pitluck S."/>
            <person name="Chertkov O."/>
            <person name="Meincke L."/>
            <person name="Brettin T."/>
            <person name="Detter J.C."/>
            <person name="Han C."/>
            <person name="Tapia R."/>
            <person name="Kuske C.R."/>
            <person name="Schmutz J."/>
            <person name="Larimer F."/>
            <person name="Land M."/>
            <person name="Hauser L."/>
            <person name="Kyrpides N."/>
            <person name="Mikhailova N."/>
            <person name="Sung Y."/>
            <person name="Fletcher K.E."/>
            <person name="Ritalahti K.M."/>
            <person name="Loeffler F.E."/>
            <person name="Richardson P."/>
        </authorList>
    </citation>
    <scope>NUCLEOTIDE SEQUENCE [LARGE SCALE GENOMIC DNA]</scope>
    <source>
        <strain>ATCC BAA-1151 / DSM 17278 / SZ</strain>
    </source>
</reference>